<feature type="chain" id="PRO_0000118851" description="NADH-ubiquinone oxidoreductase 20 kDa subunit">
    <location>
        <begin position="1"/>
        <end position="15" status="greater than"/>
    </location>
</feature>
<feature type="non-terminal residue">
    <location>
        <position position="15"/>
    </location>
</feature>
<sequence length="15" mass="1573">XSNATDETXLKDVSA</sequence>
<organism>
    <name type="scientific">Solanum tuberosum</name>
    <name type="common">Potato</name>
    <dbReference type="NCBI Taxonomy" id="4113"/>
    <lineage>
        <taxon>Eukaryota</taxon>
        <taxon>Viridiplantae</taxon>
        <taxon>Streptophyta</taxon>
        <taxon>Embryophyta</taxon>
        <taxon>Tracheophyta</taxon>
        <taxon>Spermatophyta</taxon>
        <taxon>Magnoliopsida</taxon>
        <taxon>eudicotyledons</taxon>
        <taxon>Gunneridae</taxon>
        <taxon>Pentapetalae</taxon>
        <taxon>asterids</taxon>
        <taxon>lamiids</taxon>
        <taxon>Solanales</taxon>
        <taxon>Solanaceae</taxon>
        <taxon>Solanoideae</taxon>
        <taxon>Solaneae</taxon>
        <taxon>Solanum</taxon>
    </lineage>
</organism>
<dbReference type="EC" id="7.1.1.2"/>
<dbReference type="PIR" id="G49732">
    <property type="entry name" value="G49732"/>
</dbReference>
<dbReference type="InParanoid" id="P80263"/>
<dbReference type="Proteomes" id="UP000011115">
    <property type="component" value="Unassembled WGS sequence"/>
</dbReference>
<dbReference type="GO" id="GO:0005743">
    <property type="term" value="C:mitochondrial inner membrane"/>
    <property type="evidence" value="ECO:0007669"/>
    <property type="project" value="UniProtKB-SubCell"/>
</dbReference>
<dbReference type="GO" id="GO:0008137">
    <property type="term" value="F:NADH dehydrogenase (ubiquinone) activity"/>
    <property type="evidence" value="ECO:0007669"/>
    <property type="project" value="UniProtKB-EC"/>
</dbReference>
<name>NUO3_SOLTU</name>
<comment type="function">
    <text>Transfer of electrons from NADH to the respiratory chain. The immediate electron acceptor for the enzyme is believed to be ubiquinone.</text>
</comment>
<comment type="catalytic activity">
    <reaction>
        <text>a ubiquinone + NADH + 5 H(+)(in) = a ubiquinol + NAD(+) + 4 H(+)(out)</text>
        <dbReference type="Rhea" id="RHEA:29091"/>
        <dbReference type="Rhea" id="RHEA-COMP:9565"/>
        <dbReference type="Rhea" id="RHEA-COMP:9566"/>
        <dbReference type="ChEBI" id="CHEBI:15378"/>
        <dbReference type="ChEBI" id="CHEBI:16389"/>
        <dbReference type="ChEBI" id="CHEBI:17976"/>
        <dbReference type="ChEBI" id="CHEBI:57540"/>
        <dbReference type="ChEBI" id="CHEBI:57945"/>
        <dbReference type="EC" id="7.1.1.2"/>
    </reaction>
</comment>
<comment type="subunit">
    <text evidence="1">Complex I is composed of about 45 different subunits.</text>
</comment>
<comment type="subcellular location">
    <subcellularLocation>
        <location>Mitochondrion inner membrane</location>
        <topology>Peripheral membrane protein</topology>
        <orientation>Matrix side</orientation>
    </subcellularLocation>
</comment>
<reference key="1">
    <citation type="journal article" date="1994" name="J. Biol. Chem.">
        <title>Purification of the NADH:ubiquinone oxidoreductase (complex I) of the respiratory chain from the inner mitochondrial membrane of Solanum tuberosum.</title>
        <authorList>
            <person name="Herz U."/>
            <person name="Schroeder W."/>
            <person name="Liddell A."/>
            <person name="Leaver C.J."/>
            <person name="Brennicke A."/>
            <person name="Grohmann L."/>
        </authorList>
    </citation>
    <scope>PROTEIN SEQUENCE</scope>
    <source>
        <strain>cv. Bintje</strain>
        <tissue>Tuber</tissue>
    </source>
</reference>
<protein>
    <recommendedName>
        <fullName>NADH-ubiquinone oxidoreductase 20 kDa subunit</fullName>
        <ecNumber>7.1.1.2</ecNumber>
    </recommendedName>
    <alternativeName>
        <fullName>Complex I-20kD</fullName>
        <shortName>CI-20kD</shortName>
    </alternativeName>
</protein>
<proteinExistence type="evidence at protein level"/>
<accession>P80263</accession>
<keyword id="KW-0903">Direct protein sequencing</keyword>
<keyword id="KW-0472">Membrane</keyword>
<keyword id="KW-0496">Mitochondrion</keyword>
<keyword id="KW-0999">Mitochondrion inner membrane</keyword>
<keyword id="KW-0520">NAD</keyword>
<keyword id="KW-0560">Oxidoreductase</keyword>
<keyword id="KW-1185">Reference proteome</keyword>
<keyword id="KW-1278">Translocase</keyword>
<keyword id="KW-0830">Ubiquinone</keyword>
<evidence type="ECO:0000250" key="1"/>